<feature type="chain" id="PRO_0000219309" description="Cyclic nucleotide-gated channel alpha-1">
    <location>
        <begin position="1"/>
        <end position="684"/>
    </location>
</feature>
<feature type="topological domain" description="Cytoplasmic" evidence="6">
    <location>
        <begin position="1"/>
        <end position="161"/>
    </location>
</feature>
<feature type="transmembrane region" description="Helical; Name=S1" evidence="1">
    <location>
        <begin position="162"/>
        <end position="183"/>
    </location>
</feature>
<feature type="topological domain" description="Extracellular" evidence="6">
    <location>
        <begin position="184"/>
        <end position="193"/>
    </location>
</feature>
<feature type="transmembrane region" description="Helical; Name=S2" evidence="1">
    <location>
        <begin position="194"/>
        <end position="214"/>
    </location>
</feature>
<feature type="topological domain" description="Cytoplasmic" evidence="6">
    <location>
        <begin position="215"/>
        <end position="239"/>
    </location>
</feature>
<feature type="transmembrane region" description="Helical; Name=S3" evidence="1">
    <location>
        <begin position="240"/>
        <end position="258"/>
    </location>
</feature>
<feature type="topological domain" description="Extracellular" evidence="6">
    <location>
        <begin position="259"/>
        <end position="263"/>
    </location>
</feature>
<feature type="transmembrane region" description="Helical; Name=S4" evidence="1">
    <location>
        <begin position="264"/>
        <end position="282"/>
    </location>
</feature>
<feature type="topological domain" description="Cytoplasmic" evidence="6">
    <location>
        <begin position="283"/>
        <end position="289"/>
    </location>
</feature>
<feature type="transmembrane region" description="Helical; Name=S5" evidence="1">
    <location>
        <begin position="290"/>
        <end position="313"/>
    </location>
</feature>
<feature type="topological domain" description="Extracellular" evidence="6">
    <location>
        <begin position="314"/>
        <end position="336"/>
    </location>
</feature>
<feature type="transmembrane region" description="Helical; Name=P-helix" evidence="1">
    <location>
        <begin position="337"/>
        <end position="371"/>
    </location>
</feature>
<feature type="transmembrane region" description="Helical; Name=S6" evidence="1">
    <location>
        <begin position="372"/>
        <end position="396"/>
    </location>
</feature>
<feature type="topological domain" description="Cytoplasmic" evidence="6">
    <location>
        <begin position="397"/>
        <end position="684"/>
    </location>
</feature>
<feature type="region of interest" description="Disordered" evidence="4">
    <location>
        <begin position="34"/>
        <end position="145"/>
    </location>
</feature>
<feature type="region of interest" description="Ion conduction pathway" evidence="1">
    <location>
        <begin position="287"/>
        <end position="395"/>
    </location>
</feature>
<feature type="region of interest" description="Selectivity filter" evidence="1">
    <location>
        <begin position="354"/>
        <end position="357"/>
    </location>
</feature>
<feature type="region of interest" description="C-linker" evidence="1">
    <location>
        <begin position="397"/>
        <end position="473"/>
    </location>
</feature>
<feature type="region of interest" description="Cyclic nucleotide-binding domain" evidence="1">
    <location>
        <begin position="477"/>
        <end position="597"/>
    </location>
</feature>
<feature type="coiled-coil region" evidence="1">
    <location>
        <begin position="615"/>
        <end position="669"/>
    </location>
</feature>
<feature type="compositionally biased region" description="Acidic residues" evidence="4">
    <location>
        <begin position="39"/>
        <end position="54"/>
    </location>
</feature>
<feature type="compositionally biased region" description="Basic and acidic residues" evidence="4">
    <location>
        <begin position="105"/>
        <end position="145"/>
    </location>
</feature>
<feature type="binding site" evidence="1">
    <location>
        <position position="537"/>
    </location>
    <ligand>
        <name>3',5'-cyclic GMP</name>
        <dbReference type="ChEBI" id="CHEBI:57746"/>
    </ligand>
</feature>
<feature type="binding site" evidence="1">
    <location>
        <position position="540"/>
    </location>
    <ligand>
        <name>3',5'-cyclic GMP</name>
        <dbReference type="ChEBI" id="CHEBI:57746"/>
    </ligand>
</feature>
<feature type="binding site" evidence="1">
    <location>
        <position position="553"/>
    </location>
    <ligand>
        <name>3',5'-cyclic AMP</name>
        <dbReference type="ChEBI" id="CHEBI:58165"/>
    </ligand>
</feature>
<feature type="binding site" evidence="1">
    <location>
        <position position="553"/>
    </location>
    <ligand>
        <name>3',5'-cyclic GMP</name>
        <dbReference type="ChEBI" id="CHEBI:57746"/>
    </ligand>
</feature>
<feature type="binding site" evidence="1">
    <location>
        <position position="554"/>
    </location>
    <ligand>
        <name>3',5'-cyclic AMP</name>
        <dbReference type="ChEBI" id="CHEBI:58165"/>
    </ligand>
</feature>
<feature type="binding site" evidence="1">
    <location>
        <position position="554"/>
    </location>
    <ligand>
        <name>3',5'-cyclic GMP</name>
        <dbReference type="ChEBI" id="CHEBI:57746"/>
    </ligand>
</feature>
<feature type="site" description="Central gate" evidence="1">
    <location>
        <position position="381"/>
    </location>
</feature>
<feature type="site" description="Central gate" evidence="1">
    <location>
        <position position="385"/>
    </location>
</feature>
<feature type="glycosylation site" description="N-linked (GlcNAc...) asparagine" evidence="2">
    <location>
        <position position="321"/>
    </location>
</feature>
<feature type="sequence conflict" description="In Ref. 1; AAA37425." evidence="6" ref="1">
    <original>NK</original>
    <variation>I</variation>
    <location>
        <begin position="113"/>
        <end position="114"/>
    </location>
</feature>
<feature type="sequence conflict" description="In Ref. 1; AAA37425." evidence="6" ref="1">
    <original>D</original>
    <variation>N</variation>
    <location>
        <position position="200"/>
    </location>
</feature>
<feature type="sequence conflict" description="In Ref. 1; AAA37425." evidence="6" ref="1">
    <original>A</original>
    <variation>V</variation>
    <location>
        <position position="576"/>
    </location>
</feature>
<feature type="sequence conflict" description="In Ref. 1; AAA37425." evidence="6" ref="1">
    <original>R</original>
    <variation>C</variation>
    <location>
        <position position="635"/>
    </location>
</feature>
<sequence>MKTNIINTWHSFVNIPNVIVPAIEKEIRRMENGACSSFSDDDNGSLSEESENEDSFFRSNSYKRRGPSQREQHLPGTMALFNVNNSSNKDQEPKEKKKKKKEKKSKADDKNENKKDPEKKKKKEKEKEKKKKEEKTKEKKEEEKKEVVVIDPSGNTYYNWLFCITLPVMYNWTMIIARACFDELQSDYLEYWLIFDYVSDVVYLADMFVRTRTGYLEQGLLVKDRMKLIEKYKANLQFKLDVLSVIPTDLLYIKFGWNYPEIRLNRLLRISRMFEFFQRTETRTNYPNIFRISNLVMYIVIIIHWNACVYYSISKAIGFGNDTWVYPDVNDPEFGRLARKYVYSLYWSTLTLTTIGETPPPVLDSEYIFVVVDFLIGVLIFATIVGNIGSMISNMNAARAEFQSRVDAIKQYMNFRNVSKDMEKRVIKWFDYLWTNKKTVDEREVLRYLPDKLRAEIAINVHLDTLKKVRIFADCEAGLLVELVLKLQPQVYSPGDYICKKGDIGREMYIIKEGKLAVVADDGITQFVVLSDGSYFGEISILNIKGSKAGNRRTANIKSIGYSDLFCLSKDDLMEALTEYPDAKTMLEEKGRQILMKDGLLDINIANMGSDPKDLEEKVTRMEGSVDLLQTRFARILAEYESMQQKLKQRLTKVEKFLKPLIETEFSALEEPGGESELTESLQD</sequence>
<dbReference type="EMBL" id="M84742">
    <property type="protein sequence ID" value="AAA37425.1"/>
    <property type="molecule type" value="mRNA"/>
</dbReference>
<dbReference type="EMBL" id="U19717">
    <property type="protein sequence ID" value="AAA85702.1"/>
    <property type="molecule type" value="mRNA"/>
</dbReference>
<dbReference type="EMBL" id="U19715">
    <property type="protein sequence ID" value="AAA85700.1"/>
    <property type="molecule type" value="mRNA"/>
</dbReference>
<dbReference type="EMBL" id="U19716">
    <property type="protein sequence ID" value="AAA85701.1"/>
    <property type="molecule type" value="mRNA"/>
</dbReference>
<dbReference type="EMBL" id="BC141261">
    <property type="protein sequence ID" value="AAI41262.1"/>
    <property type="molecule type" value="mRNA"/>
</dbReference>
<dbReference type="CCDS" id="CCDS19333.1"/>
<dbReference type="RefSeq" id="NP_031749.2">
    <property type="nucleotide sequence ID" value="NM_007723.2"/>
</dbReference>
<dbReference type="SMR" id="P29974"/>
<dbReference type="BioGRID" id="198783">
    <property type="interactions" value="17"/>
</dbReference>
<dbReference type="FunCoup" id="P29974">
    <property type="interactions" value="371"/>
</dbReference>
<dbReference type="IntAct" id="P29974">
    <property type="interactions" value="1"/>
</dbReference>
<dbReference type="STRING" id="10090.ENSMUSP00000084464"/>
<dbReference type="GlyCosmos" id="P29974">
    <property type="glycosylation" value="1 site, No reported glycans"/>
</dbReference>
<dbReference type="GlyGen" id="P29974">
    <property type="glycosylation" value="1 site"/>
</dbReference>
<dbReference type="iPTMnet" id="P29974"/>
<dbReference type="PhosphoSitePlus" id="P29974"/>
<dbReference type="PaxDb" id="10090-ENSMUSP00000084464"/>
<dbReference type="ProteomicsDB" id="283399"/>
<dbReference type="ABCD" id="P29974">
    <property type="antibodies" value="1 sequenced antibody"/>
</dbReference>
<dbReference type="Antibodypedia" id="23791">
    <property type="antibodies" value="96 antibodies from 24 providers"/>
</dbReference>
<dbReference type="DNASU" id="12788"/>
<dbReference type="Ensembl" id="ENSMUST00000087213.12">
    <property type="protein sequence ID" value="ENSMUSP00000084464.6"/>
    <property type="gene ID" value="ENSMUSG00000067220.13"/>
</dbReference>
<dbReference type="Ensembl" id="ENSMUST00000169997.6">
    <property type="protein sequence ID" value="ENSMUSP00000132329.2"/>
    <property type="gene ID" value="ENSMUSG00000067220.13"/>
</dbReference>
<dbReference type="Ensembl" id="ENSMUST00000201463.4">
    <property type="protein sequence ID" value="ENSMUSP00000143881.2"/>
    <property type="gene ID" value="ENSMUSG00000067220.13"/>
</dbReference>
<dbReference type="GeneID" id="12788"/>
<dbReference type="KEGG" id="mmu:12788"/>
<dbReference type="UCSC" id="uc008xrr.1">
    <property type="organism name" value="mouse"/>
</dbReference>
<dbReference type="AGR" id="MGI:88436"/>
<dbReference type="CTD" id="1259"/>
<dbReference type="MGI" id="MGI:88436">
    <property type="gene designation" value="Cnga1"/>
</dbReference>
<dbReference type="VEuPathDB" id="HostDB:ENSMUSG00000067220"/>
<dbReference type="eggNOG" id="KOG0500">
    <property type="taxonomic scope" value="Eukaryota"/>
</dbReference>
<dbReference type="GeneTree" id="ENSGT00940000156074"/>
<dbReference type="InParanoid" id="P29974"/>
<dbReference type="OMA" id="ECEPQTR"/>
<dbReference type="OrthoDB" id="421226at2759"/>
<dbReference type="PhylomeDB" id="P29974"/>
<dbReference type="TreeFam" id="TF319048"/>
<dbReference type="Reactome" id="R-MMU-2485179">
    <property type="pathway name" value="Activation of the phototransduction cascade"/>
</dbReference>
<dbReference type="Reactome" id="R-MMU-2514859">
    <property type="pathway name" value="Inactivation, recovery and regulation of the phototransduction cascade"/>
</dbReference>
<dbReference type="BioGRID-ORCS" id="12788">
    <property type="hits" value="2 hits in 76 CRISPR screens"/>
</dbReference>
<dbReference type="ChiTaRS" id="Cnga1">
    <property type="organism name" value="mouse"/>
</dbReference>
<dbReference type="PRO" id="PR:P29974"/>
<dbReference type="Proteomes" id="UP000000589">
    <property type="component" value="Chromosome 5"/>
</dbReference>
<dbReference type="RNAct" id="P29974">
    <property type="molecule type" value="protein"/>
</dbReference>
<dbReference type="Bgee" id="ENSMUSG00000067220">
    <property type="expression patterns" value="Expressed in retinal neural layer and 48 other cell types or tissues"/>
</dbReference>
<dbReference type="ExpressionAtlas" id="P29974">
    <property type="expression patterns" value="baseline and differential"/>
</dbReference>
<dbReference type="GO" id="GO:0016020">
    <property type="term" value="C:membrane"/>
    <property type="evidence" value="ECO:0000314"/>
    <property type="project" value="MGI"/>
</dbReference>
<dbReference type="GO" id="GO:0001750">
    <property type="term" value="C:photoreceptor outer segment"/>
    <property type="evidence" value="ECO:0000314"/>
    <property type="project" value="MGI"/>
</dbReference>
<dbReference type="GO" id="GO:0042622">
    <property type="term" value="C:photoreceptor outer segment membrane"/>
    <property type="evidence" value="ECO:0000314"/>
    <property type="project" value="BHF-UCL"/>
</dbReference>
<dbReference type="GO" id="GO:0120200">
    <property type="term" value="C:rod photoreceptor outer segment"/>
    <property type="evidence" value="ECO:0000314"/>
    <property type="project" value="UniProtKB"/>
</dbReference>
<dbReference type="GO" id="GO:0005262">
    <property type="term" value="F:calcium channel activity"/>
    <property type="evidence" value="ECO:0007669"/>
    <property type="project" value="UniProtKB-KW"/>
</dbReference>
<dbReference type="GO" id="GO:0030552">
    <property type="term" value="F:cAMP binding"/>
    <property type="evidence" value="ECO:0000250"/>
    <property type="project" value="UniProtKB"/>
</dbReference>
<dbReference type="GO" id="GO:0030553">
    <property type="term" value="F:cGMP binding"/>
    <property type="evidence" value="ECO:0000250"/>
    <property type="project" value="UniProtKB"/>
</dbReference>
<dbReference type="GO" id="GO:0005222">
    <property type="term" value="F:intracellularly cAMP-activated cation channel activity"/>
    <property type="evidence" value="ECO:0000250"/>
    <property type="project" value="UniProtKB"/>
</dbReference>
<dbReference type="GO" id="GO:0005223">
    <property type="term" value="F:intracellularly cGMP-activated cation channel activity"/>
    <property type="evidence" value="ECO:0000250"/>
    <property type="project" value="UniProtKB"/>
</dbReference>
<dbReference type="GO" id="GO:0005272">
    <property type="term" value="F:sodium channel activity"/>
    <property type="evidence" value="ECO:0007669"/>
    <property type="project" value="UniProtKB-KW"/>
</dbReference>
<dbReference type="GO" id="GO:0006816">
    <property type="term" value="P:calcium ion transport"/>
    <property type="evidence" value="ECO:0000250"/>
    <property type="project" value="UniProtKB"/>
</dbReference>
<dbReference type="GO" id="GO:0006814">
    <property type="term" value="P:sodium ion transport"/>
    <property type="evidence" value="ECO:0000250"/>
    <property type="project" value="UniProtKB"/>
</dbReference>
<dbReference type="GO" id="GO:0007601">
    <property type="term" value="P:visual perception"/>
    <property type="evidence" value="ECO:0007669"/>
    <property type="project" value="UniProtKB-KW"/>
</dbReference>
<dbReference type="CDD" id="cd00038">
    <property type="entry name" value="CAP_ED"/>
    <property type="match status" value="1"/>
</dbReference>
<dbReference type="FunFam" id="1.20.5.170:FF:000069">
    <property type="entry name" value="cGMP-gated cation channel alpha-1"/>
    <property type="match status" value="1"/>
</dbReference>
<dbReference type="FunFam" id="2.60.120.10:FF:000002">
    <property type="entry name" value="Cyclic nucleotide gated channel alpha 1a"/>
    <property type="match status" value="1"/>
</dbReference>
<dbReference type="FunFam" id="1.10.287.630:FF:000001">
    <property type="entry name" value="Cyclic nucleotide-gated channel alpha 3"/>
    <property type="match status" value="1"/>
</dbReference>
<dbReference type="FunFam" id="1.10.287.70:FF:000030">
    <property type="entry name" value="Cyclic nucleotide-gated channel alpha 3"/>
    <property type="match status" value="1"/>
</dbReference>
<dbReference type="Gene3D" id="1.10.287.70">
    <property type="match status" value="1"/>
</dbReference>
<dbReference type="Gene3D" id="1.20.5.170">
    <property type="match status" value="1"/>
</dbReference>
<dbReference type="Gene3D" id="1.10.287.630">
    <property type="entry name" value="Helix hairpin bin"/>
    <property type="match status" value="1"/>
</dbReference>
<dbReference type="Gene3D" id="2.60.120.10">
    <property type="entry name" value="Jelly Rolls"/>
    <property type="match status" value="1"/>
</dbReference>
<dbReference type="InterPro" id="IPR032406">
    <property type="entry name" value="CLZ_dom"/>
</dbReference>
<dbReference type="InterPro" id="IPR050866">
    <property type="entry name" value="CNG_cation_channel"/>
</dbReference>
<dbReference type="InterPro" id="IPR018488">
    <property type="entry name" value="cNMP-bd_CS"/>
</dbReference>
<dbReference type="InterPro" id="IPR000595">
    <property type="entry name" value="cNMP-bd_dom"/>
</dbReference>
<dbReference type="InterPro" id="IPR018490">
    <property type="entry name" value="cNMP-bd_dom_sf"/>
</dbReference>
<dbReference type="InterPro" id="IPR005821">
    <property type="entry name" value="Ion_trans_dom"/>
</dbReference>
<dbReference type="InterPro" id="IPR014710">
    <property type="entry name" value="RmlC-like_jellyroll"/>
</dbReference>
<dbReference type="PANTHER" id="PTHR45638">
    <property type="entry name" value="CYCLIC NUCLEOTIDE-GATED CATION CHANNEL SUBUNIT A"/>
    <property type="match status" value="1"/>
</dbReference>
<dbReference type="PANTHER" id="PTHR45638:SF9">
    <property type="entry name" value="CYCLIC NUCLEOTIDE-GATED CHANNEL ROD PHOTORECEPTOR SUBUNIT ALPHA"/>
    <property type="match status" value="1"/>
</dbReference>
<dbReference type="Pfam" id="PF16526">
    <property type="entry name" value="CLZ"/>
    <property type="match status" value="1"/>
</dbReference>
<dbReference type="Pfam" id="PF00027">
    <property type="entry name" value="cNMP_binding"/>
    <property type="match status" value="1"/>
</dbReference>
<dbReference type="Pfam" id="PF00520">
    <property type="entry name" value="Ion_trans"/>
    <property type="match status" value="1"/>
</dbReference>
<dbReference type="SMART" id="SM00100">
    <property type="entry name" value="cNMP"/>
    <property type="match status" value="1"/>
</dbReference>
<dbReference type="SUPFAM" id="SSF51206">
    <property type="entry name" value="cAMP-binding domain-like"/>
    <property type="match status" value="1"/>
</dbReference>
<dbReference type="SUPFAM" id="SSF81324">
    <property type="entry name" value="Voltage-gated potassium channels"/>
    <property type="match status" value="1"/>
</dbReference>
<dbReference type="PROSITE" id="PS00888">
    <property type="entry name" value="CNMP_BINDING_1"/>
    <property type="match status" value="1"/>
</dbReference>
<dbReference type="PROSITE" id="PS00889">
    <property type="entry name" value="CNMP_BINDING_2"/>
    <property type="match status" value="1"/>
</dbReference>
<dbReference type="PROSITE" id="PS50042">
    <property type="entry name" value="CNMP_BINDING_3"/>
    <property type="match status" value="1"/>
</dbReference>
<protein>
    <recommendedName>
        <fullName>Cyclic nucleotide-gated channel alpha-1</fullName>
        <shortName>CNG channel alpha-1</shortName>
        <shortName>CNG-1</shortName>
        <shortName evidence="5">CNG1</shortName>
    </recommendedName>
    <alternativeName>
        <fullName>Cyclic nucleotide-gated cation channel 1</fullName>
    </alternativeName>
    <alternativeName>
        <fullName>Cyclic nucleotide-gated channel, photoreceptor</fullName>
    </alternativeName>
    <alternativeName>
        <fullName evidence="1">Rod photoreceptor cGMP-gated cation channel subunit alpha</fullName>
    </alternativeName>
    <alternativeName>
        <fullName>cGMP-gated cation channel alpha-1</fullName>
    </alternativeName>
</protein>
<proteinExistence type="evidence at transcript level"/>
<comment type="function">
    <text evidence="1 2">Pore-forming subunit of the rod cyclic nucleotide-gated channel. Mediates rod photoresponses at dim light converting transient changes in intracellular cGMP levels into electrical signals. In the dark, cGMP levels are high and keep the channel open enabling a steady inward current carried by Na(+) and Ca(2+) ions that leads to membrane depolarization and neurotransmitter release from synaptic terminals. Upon photon absorption cGMP levels decline leading to channel closure and membrane hyperpolarization that ultimately slows neurotransmitter release and signals the presence of light, the end point of the phototransduction cascade. Conducts cGMP- and cAMP-gated ion currents, with permeability for monovalent and divalent cations. The selectivity for Ca(2+) over Na(+) increases with cGMP concentrations, whereas the selectivity among monovalent ions is independent of the cGMP levels.</text>
</comment>
<comment type="catalytic activity">
    <reaction evidence="2">
        <text>Ca(2+)(in) = Ca(2+)(out)</text>
        <dbReference type="Rhea" id="RHEA:29671"/>
        <dbReference type="ChEBI" id="CHEBI:29108"/>
    </reaction>
</comment>
<comment type="catalytic activity">
    <reaction evidence="2">
        <text>Na(+)(in) = Na(+)(out)</text>
        <dbReference type="Rhea" id="RHEA:34963"/>
        <dbReference type="ChEBI" id="CHEBI:29101"/>
    </reaction>
</comment>
<comment type="catalytic activity">
    <reaction evidence="2">
        <text>K(+)(in) = K(+)(out)</text>
        <dbReference type="Rhea" id="RHEA:29463"/>
        <dbReference type="ChEBI" id="CHEBI:29103"/>
    </reaction>
</comment>
<comment type="catalytic activity">
    <reaction evidence="2">
        <text>NH4(+)(in) = NH4(+)(out)</text>
        <dbReference type="Rhea" id="RHEA:28747"/>
        <dbReference type="ChEBI" id="CHEBI:28938"/>
    </reaction>
</comment>
<comment type="catalytic activity">
    <reaction evidence="2">
        <text>Rb(+)(in) = Rb(+)(out)</text>
        <dbReference type="Rhea" id="RHEA:78547"/>
        <dbReference type="ChEBI" id="CHEBI:49847"/>
    </reaction>
</comment>
<comment type="catalytic activity">
    <reaction evidence="2">
        <text>Li(+)(in) = Li(+)(out)</text>
        <dbReference type="Rhea" id="RHEA:78551"/>
        <dbReference type="ChEBI" id="CHEBI:49713"/>
    </reaction>
</comment>
<comment type="catalytic activity">
    <reaction evidence="2">
        <text>Cs(+)(in) = Cs(+)(out)</text>
        <dbReference type="Rhea" id="RHEA:78555"/>
        <dbReference type="ChEBI" id="CHEBI:49547"/>
    </reaction>
</comment>
<comment type="subunit">
    <text evidence="1 2">Forms heterotetrameric channels composed of CNGA1 and CNGB1 subunits with 3:1 stoichiometry (By similarity). May also form cyclic nucleotide-activated homotetrameric channels, that are efficiently activated by saturating cGMP, but poorly activated by saturating cAMP compared to the heterotetramer with CNGB1. The channel binds Ca(2+)-bound CALM1 via CaM1 and CaM2 regions of the CNGB1 subunit; this interaction modulates the affinity of the channel for cNMPs in response to intracellular Ca(2+) levels (By similarity).</text>
</comment>
<comment type="subcellular location">
    <subcellularLocation>
        <location evidence="1">Cell membrane</location>
        <topology evidence="3">Multi-pass membrane protein</topology>
    </subcellularLocation>
</comment>
<comment type="tissue specificity">
    <text>Rod cells in the retina and inner medulla of kidney.</text>
</comment>
<comment type="domain">
    <text evidence="1">The C-terminal coiled-coil domain mediates homotrimerization of CNGA1 subunit.</text>
</comment>
<comment type="domain">
    <text evidence="1">The cyclic nucleotide-binding domain (CNBD) comprises three helices and a beta-roll of eight beta-strands from CNGA1 and CNGB1 subunits. Upon cNMP binding transmits the conformational changes to the C-linker domain of the S6 helix to open the ion conduction pathway.</text>
</comment>
<comment type="domain">
    <text evidence="1">The ion conduction pathway consists of S5, S6 and pore helices from CNGA1 and CNGB1 subunits. It contains a central hydrophobic gate that opens upon cNMP binding.</text>
</comment>
<comment type="similarity">
    <text evidence="6">Belongs to the cyclic nucleotide-gated cation channel (TC 1.A.1.5) family. CNGA1 subfamily.</text>
</comment>
<evidence type="ECO:0000250" key="1">
    <source>
        <dbReference type="UniProtKB" id="P29973"/>
    </source>
</evidence>
<evidence type="ECO:0000250" key="2">
    <source>
        <dbReference type="UniProtKB" id="Q00194"/>
    </source>
</evidence>
<evidence type="ECO:0000255" key="3"/>
<evidence type="ECO:0000256" key="4">
    <source>
        <dbReference type="SAM" id="MobiDB-lite"/>
    </source>
</evidence>
<evidence type="ECO:0000303" key="5">
    <source>
    </source>
</evidence>
<evidence type="ECO:0000305" key="6"/>
<keyword id="KW-0106">Calcium</keyword>
<keyword id="KW-0107">Calcium channel</keyword>
<keyword id="KW-0109">Calcium transport</keyword>
<keyword id="KW-0114">cAMP</keyword>
<keyword id="KW-0116">cAMP-binding</keyword>
<keyword id="KW-1003">Cell membrane</keyword>
<keyword id="KW-0140">cGMP</keyword>
<keyword id="KW-0142">cGMP-binding</keyword>
<keyword id="KW-0175">Coiled coil</keyword>
<keyword id="KW-0325">Glycoprotein</keyword>
<keyword id="KW-0407">Ion channel</keyword>
<keyword id="KW-0406">Ion transport</keyword>
<keyword id="KW-1071">Ligand-gated ion channel</keyword>
<keyword id="KW-0472">Membrane</keyword>
<keyword id="KW-0547">Nucleotide-binding</keyword>
<keyword id="KW-1185">Reference proteome</keyword>
<keyword id="KW-0716">Sensory transduction</keyword>
<keyword id="KW-0915">Sodium</keyword>
<keyword id="KW-0894">Sodium channel</keyword>
<keyword id="KW-0739">Sodium transport</keyword>
<keyword id="KW-0812">Transmembrane</keyword>
<keyword id="KW-1133">Transmembrane helix</keyword>
<keyword id="KW-0813">Transport</keyword>
<keyword id="KW-0844">Vision</keyword>
<name>CNGA1_MOUSE</name>
<accession>P29974</accession>
<accession>B9EJ09</accession>
<accession>Q60776</accession>
<reference key="1">
    <citation type="journal article" date="1992" name="J. Biol. Chem.">
        <title>Primary structure and chromosomal localization of human and mouse rod photoreceptor cGMP-gated cation channel.</title>
        <authorList>
            <person name="Pittler S.J."/>
            <person name="Lee A.K."/>
            <person name="Altherr M.R."/>
            <person name="Howard T.A."/>
            <person name="Seldin M.F."/>
            <person name="Hurwitz R.L."/>
            <person name="Wasmuth J.J."/>
            <person name="Baehr W."/>
        </authorList>
    </citation>
    <scope>NUCLEOTIDE SEQUENCE [MRNA]</scope>
    <source>
        <tissue>Retina</tissue>
    </source>
</reference>
<reference key="2">
    <citation type="journal article" date="1995" name="Biochim. Biophys. Acta">
        <title>Cloning of a cGMP-gated cation channel from mouse kidney inner medullary collecting duct.</title>
        <authorList>
            <person name="Karlson K.H."/>
            <person name="Ciampolillo-Bates F."/>
            <person name="McCoy D.E."/>
            <person name="Kizer N.L."/>
            <person name="Stanton B.A."/>
        </authorList>
    </citation>
    <scope>NUCLEOTIDE SEQUENCE [MRNA]</scope>
    <source>
        <tissue>Kidney</tissue>
    </source>
</reference>
<reference key="3">
    <citation type="journal article" date="2004" name="Genome Res.">
        <title>The status, quality, and expansion of the NIH full-length cDNA project: the Mammalian Gene Collection (MGC).</title>
        <authorList>
            <consortium name="The MGC Project Team"/>
        </authorList>
    </citation>
    <scope>NUCLEOTIDE SEQUENCE [LARGE SCALE MRNA]</scope>
    <source>
        <tissue>Brain</tissue>
    </source>
</reference>
<reference key="4">
    <citation type="journal article" date="2001" name="Science">
        <title>Nomenclature for ion channel subunits.</title>
        <authorList>
            <person name="Bradley J."/>
            <person name="Frings S."/>
            <person name="Yau K.W."/>
            <person name="Reed R."/>
        </authorList>
    </citation>
    <scope>NOMENCLATURE</scope>
</reference>
<gene>
    <name type="primary">Cnga1</name>
    <name type="synonym">Cncg</name>
    <name type="synonym">Cncg1</name>
</gene>
<organism>
    <name type="scientific">Mus musculus</name>
    <name type="common">Mouse</name>
    <dbReference type="NCBI Taxonomy" id="10090"/>
    <lineage>
        <taxon>Eukaryota</taxon>
        <taxon>Metazoa</taxon>
        <taxon>Chordata</taxon>
        <taxon>Craniata</taxon>
        <taxon>Vertebrata</taxon>
        <taxon>Euteleostomi</taxon>
        <taxon>Mammalia</taxon>
        <taxon>Eutheria</taxon>
        <taxon>Euarchontoglires</taxon>
        <taxon>Glires</taxon>
        <taxon>Rodentia</taxon>
        <taxon>Myomorpha</taxon>
        <taxon>Muroidea</taxon>
        <taxon>Muridae</taxon>
        <taxon>Murinae</taxon>
        <taxon>Mus</taxon>
        <taxon>Mus</taxon>
    </lineage>
</organism>